<keyword id="KW-0256">Endoplasmic reticulum</keyword>
<keyword id="KW-0472">Membrane</keyword>
<keyword id="KW-0653">Protein transport</keyword>
<keyword id="KW-1185">Reference proteome</keyword>
<keyword id="KW-0811">Translocation</keyword>
<keyword id="KW-0812">Transmembrane</keyword>
<keyword id="KW-1133">Transmembrane helix</keyword>
<keyword id="KW-0813">Transport</keyword>
<name>SC61B_KLULA</name>
<protein>
    <recommendedName>
        <fullName>Protein transport protein Sec61 subunit beta</fullName>
    </recommendedName>
</protein>
<comment type="function">
    <text evidence="1">Necessary for protein translocation in the endoplasmic reticulum.</text>
</comment>
<comment type="subunit">
    <text evidence="1">Heterotrimeric complex composed of SEC61, SEB1 and SSS1.</text>
</comment>
<comment type="subcellular location">
    <subcellularLocation>
        <location evidence="1">Endoplasmic reticulum membrane</location>
        <topology evidence="1">Single-pass membrane protein</topology>
    </subcellularLocation>
</comment>
<comment type="similarity">
    <text evidence="4">Belongs to the SEC61-beta family.</text>
</comment>
<evidence type="ECO:0000250" key="1"/>
<evidence type="ECO:0000255" key="2"/>
<evidence type="ECO:0000256" key="3">
    <source>
        <dbReference type="SAM" id="MobiDB-lite"/>
    </source>
</evidence>
<evidence type="ECO:0000305" key="4"/>
<feature type="chain" id="PRO_0000157258" description="Protein transport protein Sec61 subunit beta">
    <location>
        <begin position="1"/>
        <end position="88"/>
    </location>
</feature>
<feature type="topological domain" description="Cytoplasmic" evidence="2">
    <location>
        <begin position="1"/>
        <end position="60"/>
    </location>
</feature>
<feature type="transmembrane region" description="Helical" evidence="2">
    <location>
        <begin position="61"/>
        <end position="81"/>
    </location>
</feature>
<feature type="region of interest" description="Disordered" evidence="3">
    <location>
        <begin position="1"/>
        <end position="41"/>
    </location>
</feature>
<gene>
    <name type="primary">SBH1</name>
    <name type="synonym">SEB1</name>
    <name type="ordered locus">KLLA0E19921g</name>
</gene>
<reference key="1">
    <citation type="submission" date="2000-11" db="EMBL/GenBank/DDBJ databases">
        <title>Kluyveromyces lactis SEB1 gene.</title>
        <authorList>
            <person name="Sundqvist L."/>
            <person name="Toikkanen J."/>
            <person name="Keranen S."/>
        </authorList>
    </citation>
    <scope>NUCLEOTIDE SEQUENCE [GENOMIC DNA]</scope>
</reference>
<reference key="2">
    <citation type="journal article" date="2004" name="Nature">
        <title>Genome evolution in yeasts.</title>
        <authorList>
            <person name="Dujon B."/>
            <person name="Sherman D."/>
            <person name="Fischer G."/>
            <person name="Durrens P."/>
            <person name="Casaregola S."/>
            <person name="Lafontaine I."/>
            <person name="de Montigny J."/>
            <person name="Marck C."/>
            <person name="Neuveglise C."/>
            <person name="Talla E."/>
            <person name="Goffard N."/>
            <person name="Frangeul L."/>
            <person name="Aigle M."/>
            <person name="Anthouard V."/>
            <person name="Babour A."/>
            <person name="Barbe V."/>
            <person name="Barnay S."/>
            <person name="Blanchin S."/>
            <person name="Beckerich J.-M."/>
            <person name="Beyne E."/>
            <person name="Bleykasten C."/>
            <person name="Boisrame A."/>
            <person name="Boyer J."/>
            <person name="Cattolico L."/>
            <person name="Confanioleri F."/>
            <person name="de Daruvar A."/>
            <person name="Despons L."/>
            <person name="Fabre E."/>
            <person name="Fairhead C."/>
            <person name="Ferry-Dumazet H."/>
            <person name="Groppi A."/>
            <person name="Hantraye F."/>
            <person name="Hennequin C."/>
            <person name="Jauniaux N."/>
            <person name="Joyet P."/>
            <person name="Kachouri R."/>
            <person name="Kerrest A."/>
            <person name="Koszul R."/>
            <person name="Lemaire M."/>
            <person name="Lesur I."/>
            <person name="Ma L."/>
            <person name="Muller H."/>
            <person name="Nicaud J.-M."/>
            <person name="Nikolski M."/>
            <person name="Oztas S."/>
            <person name="Ozier-Kalogeropoulos O."/>
            <person name="Pellenz S."/>
            <person name="Potier S."/>
            <person name="Richard G.-F."/>
            <person name="Straub M.-L."/>
            <person name="Suleau A."/>
            <person name="Swennen D."/>
            <person name="Tekaia F."/>
            <person name="Wesolowski-Louvel M."/>
            <person name="Westhof E."/>
            <person name="Wirth B."/>
            <person name="Zeniou-Meyer M."/>
            <person name="Zivanovic Y."/>
            <person name="Bolotin-Fukuhara M."/>
            <person name="Thierry A."/>
            <person name="Bouchier C."/>
            <person name="Caudron B."/>
            <person name="Scarpelli C."/>
            <person name="Gaillardin C."/>
            <person name="Weissenbach J."/>
            <person name="Wincker P."/>
            <person name="Souciet J.-L."/>
        </authorList>
    </citation>
    <scope>NUCLEOTIDE SEQUENCE [LARGE SCALE GENOMIC DNA]</scope>
    <source>
        <strain>ATCC 8585 / CBS 2359 / DSM 70799 / NBRC 1267 / NRRL Y-1140 / WM37</strain>
    </source>
</reference>
<dbReference type="EMBL" id="AF318314">
    <property type="protein sequence ID" value="AAN39012.1"/>
    <property type="molecule type" value="Genomic_DNA"/>
</dbReference>
<dbReference type="EMBL" id="CR382125">
    <property type="protein sequence ID" value="CAG99935.1"/>
    <property type="molecule type" value="Genomic_DNA"/>
</dbReference>
<dbReference type="RefSeq" id="XP_454848.1">
    <property type="nucleotide sequence ID" value="XM_454848.1"/>
</dbReference>
<dbReference type="SMR" id="Q8J2P4"/>
<dbReference type="FunCoup" id="Q8J2P4">
    <property type="interactions" value="163"/>
</dbReference>
<dbReference type="STRING" id="284590.Q8J2P4"/>
<dbReference type="PaxDb" id="284590-Q8J2P4"/>
<dbReference type="KEGG" id="kla:KLLA0_E19823g"/>
<dbReference type="eggNOG" id="KOG3457">
    <property type="taxonomic scope" value="Eukaryota"/>
</dbReference>
<dbReference type="HOGENOM" id="CLU_133423_1_1_1"/>
<dbReference type="InParanoid" id="Q8J2P4"/>
<dbReference type="OMA" id="SSGMWRF"/>
<dbReference type="Proteomes" id="UP000000598">
    <property type="component" value="Chromosome E"/>
</dbReference>
<dbReference type="GO" id="GO:0005784">
    <property type="term" value="C:Sec61 translocon complex"/>
    <property type="evidence" value="ECO:0007669"/>
    <property type="project" value="InterPro"/>
</dbReference>
<dbReference type="GO" id="GO:0006886">
    <property type="term" value="P:intracellular protein transport"/>
    <property type="evidence" value="ECO:0007669"/>
    <property type="project" value="InterPro"/>
</dbReference>
<dbReference type="InterPro" id="IPR030671">
    <property type="entry name" value="Sec61-beta/Sbh"/>
</dbReference>
<dbReference type="InterPro" id="IPR016482">
    <property type="entry name" value="SecG/Sec61-beta/Sbh"/>
</dbReference>
<dbReference type="PANTHER" id="PTHR13509">
    <property type="entry name" value="SEC61 SUBUNIT BETA"/>
    <property type="match status" value="1"/>
</dbReference>
<dbReference type="Pfam" id="PF03911">
    <property type="entry name" value="Sec61_beta"/>
    <property type="match status" value="1"/>
</dbReference>
<dbReference type="PIRSF" id="PIRSF006398">
    <property type="entry name" value="Sec61_beta_euk"/>
    <property type="match status" value="1"/>
</dbReference>
<sequence>MDSSVPGGQRTLQKRRNAQLQKEKKANQTPASPRQAGFGGSSSSILKLYTDEANGLRVDPLVVLFLAVAFVFSVVALHVVAKVSGKIF</sequence>
<organism>
    <name type="scientific">Kluyveromyces lactis (strain ATCC 8585 / CBS 2359 / DSM 70799 / NBRC 1267 / NRRL Y-1140 / WM37)</name>
    <name type="common">Yeast</name>
    <name type="synonym">Candida sphaerica</name>
    <dbReference type="NCBI Taxonomy" id="284590"/>
    <lineage>
        <taxon>Eukaryota</taxon>
        <taxon>Fungi</taxon>
        <taxon>Dikarya</taxon>
        <taxon>Ascomycota</taxon>
        <taxon>Saccharomycotina</taxon>
        <taxon>Saccharomycetes</taxon>
        <taxon>Saccharomycetales</taxon>
        <taxon>Saccharomycetaceae</taxon>
        <taxon>Kluyveromyces</taxon>
    </lineage>
</organism>
<accession>Q8J2P4</accession>
<proteinExistence type="inferred from homology"/>